<sequence length="82" mass="9781">MVRIRLARGGCKKSPFYYIVVTDSRNSRDGRFIERIGFFNPVELDIKKRLRVNLDRVRYWLSNGAQPSDRVFVLIKWSKNVY</sequence>
<feature type="chain" id="PRO_0000167167" description="Small ribosomal subunit protein bS16">
    <location>
        <begin position="1"/>
        <end position="82"/>
    </location>
</feature>
<gene>
    <name evidence="1" type="primary">rpsP</name>
    <name type="ordered locus">Bfl173</name>
</gene>
<evidence type="ECO:0000255" key="1">
    <source>
        <dbReference type="HAMAP-Rule" id="MF_00385"/>
    </source>
</evidence>
<evidence type="ECO:0000305" key="2"/>
<protein>
    <recommendedName>
        <fullName evidence="1">Small ribosomal subunit protein bS16</fullName>
    </recommendedName>
    <alternativeName>
        <fullName evidence="2">30S ribosomal protein S16</fullName>
    </alternativeName>
</protein>
<reference key="1">
    <citation type="journal article" date="2003" name="Proc. Natl. Acad. Sci. U.S.A.">
        <title>The genome sequence of Blochmannia floridanus: comparative analysis of reduced genomes.</title>
        <authorList>
            <person name="Gil R."/>
            <person name="Silva F.J."/>
            <person name="Zientz E."/>
            <person name="Delmotte F."/>
            <person name="Gonzalez-Candelas F."/>
            <person name="Latorre A."/>
            <person name="Rausell C."/>
            <person name="Kamerbeek J."/>
            <person name="Gadau J."/>
            <person name="Hoelldobler B."/>
            <person name="van Ham R.C.H.J."/>
            <person name="Gross R."/>
            <person name="Moya A."/>
        </authorList>
    </citation>
    <scope>NUCLEOTIDE SEQUENCE [LARGE SCALE GENOMIC DNA]</scope>
</reference>
<keyword id="KW-1185">Reference proteome</keyword>
<keyword id="KW-0687">Ribonucleoprotein</keyword>
<keyword id="KW-0689">Ribosomal protein</keyword>
<organism>
    <name type="scientific">Blochmanniella floridana</name>
    <dbReference type="NCBI Taxonomy" id="203907"/>
    <lineage>
        <taxon>Bacteria</taxon>
        <taxon>Pseudomonadati</taxon>
        <taxon>Pseudomonadota</taxon>
        <taxon>Gammaproteobacteria</taxon>
        <taxon>Enterobacterales</taxon>
        <taxon>Enterobacteriaceae</taxon>
        <taxon>ant endosymbionts</taxon>
        <taxon>Candidatus Blochmanniella</taxon>
    </lineage>
</organism>
<dbReference type="EMBL" id="BX248583">
    <property type="protein sequence ID" value="CAD83692.1"/>
    <property type="molecule type" value="Genomic_DNA"/>
</dbReference>
<dbReference type="SMR" id="Q7VQG0"/>
<dbReference type="STRING" id="203907.Bfl173"/>
<dbReference type="KEGG" id="bfl:Bfl173"/>
<dbReference type="eggNOG" id="COG0228">
    <property type="taxonomic scope" value="Bacteria"/>
</dbReference>
<dbReference type="HOGENOM" id="CLU_100590_5_1_6"/>
<dbReference type="OrthoDB" id="9807878at2"/>
<dbReference type="Proteomes" id="UP000002192">
    <property type="component" value="Chromosome"/>
</dbReference>
<dbReference type="GO" id="GO:0005737">
    <property type="term" value="C:cytoplasm"/>
    <property type="evidence" value="ECO:0007669"/>
    <property type="project" value="UniProtKB-ARBA"/>
</dbReference>
<dbReference type="GO" id="GO:0015935">
    <property type="term" value="C:small ribosomal subunit"/>
    <property type="evidence" value="ECO:0007669"/>
    <property type="project" value="TreeGrafter"/>
</dbReference>
<dbReference type="GO" id="GO:0003735">
    <property type="term" value="F:structural constituent of ribosome"/>
    <property type="evidence" value="ECO:0007669"/>
    <property type="project" value="InterPro"/>
</dbReference>
<dbReference type="GO" id="GO:0006412">
    <property type="term" value="P:translation"/>
    <property type="evidence" value="ECO:0007669"/>
    <property type="project" value="UniProtKB-UniRule"/>
</dbReference>
<dbReference type="Gene3D" id="3.30.1320.10">
    <property type="match status" value="1"/>
</dbReference>
<dbReference type="HAMAP" id="MF_00385">
    <property type="entry name" value="Ribosomal_bS16"/>
    <property type="match status" value="1"/>
</dbReference>
<dbReference type="InterPro" id="IPR000307">
    <property type="entry name" value="Ribosomal_bS16"/>
</dbReference>
<dbReference type="InterPro" id="IPR023803">
    <property type="entry name" value="Ribosomal_bS16_dom_sf"/>
</dbReference>
<dbReference type="NCBIfam" id="TIGR00002">
    <property type="entry name" value="S16"/>
    <property type="match status" value="1"/>
</dbReference>
<dbReference type="PANTHER" id="PTHR12919">
    <property type="entry name" value="30S RIBOSOMAL PROTEIN S16"/>
    <property type="match status" value="1"/>
</dbReference>
<dbReference type="PANTHER" id="PTHR12919:SF20">
    <property type="entry name" value="SMALL RIBOSOMAL SUBUNIT PROTEIN BS16M"/>
    <property type="match status" value="1"/>
</dbReference>
<dbReference type="Pfam" id="PF00886">
    <property type="entry name" value="Ribosomal_S16"/>
    <property type="match status" value="1"/>
</dbReference>
<dbReference type="SUPFAM" id="SSF54565">
    <property type="entry name" value="Ribosomal protein S16"/>
    <property type="match status" value="1"/>
</dbReference>
<proteinExistence type="inferred from homology"/>
<accession>Q7VQG0</accession>
<name>RS16_BLOFL</name>
<comment type="similarity">
    <text evidence="1">Belongs to the bacterial ribosomal protein bS16 family.</text>
</comment>